<proteinExistence type="evidence at protein level"/>
<evidence type="ECO:0000250" key="1"/>
<evidence type="ECO:0000269" key="2">
    <source>
    </source>
</evidence>
<evidence type="ECO:0000269" key="3">
    <source>
    </source>
</evidence>
<evidence type="ECO:0000269" key="4">
    <source>
    </source>
</evidence>
<evidence type="ECO:0000269" key="5">
    <source>
    </source>
</evidence>
<evidence type="ECO:0000269" key="6">
    <source>
    </source>
</evidence>
<evidence type="ECO:0000303" key="7">
    <source>
    </source>
</evidence>
<evidence type="ECO:0000305" key="8"/>
<evidence type="ECO:0000312" key="9">
    <source>
        <dbReference type="Araport" id="AT2G39840"/>
    </source>
</evidence>
<evidence type="ECO:0000312" key="10">
    <source>
        <dbReference type="EMBL" id="AAB87136.1"/>
    </source>
</evidence>
<evidence type="ECO:0007744" key="11">
    <source>
    </source>
</evidence>
<keyword id="KW-0007">Acetylation</keyword>
<keyword id="KW-0963">Cytoplasm</keyword>
<keyword id="KW-0341">Growth regulation</keyword>
<keyword id="KW-0378">Hydrolase</keyword>
<keyword id="KW-0464">Manganese</keyword>
<keyword id="KW-0479">Metal-binding</keyword>
<keyword id="KW-0539">Nucleus</keyword>
<keyword id="KW-0904">Protein phosphatase</keyword>
<keyword id="KW-1185">Reference proteome</keyword>
<organism>
    <name type="scientific">Arabidopsis thaliana</name>
    <name type="common">Mouse-ear cress</name>
    <dbReference type="NCBI Taxonomy" id="3702"/>
    <lineage>
        <taxon>Eukaryota</taxon>
        <taxon>Viridiplantae</taxon>
        <taxon>Streptophyta</taxon>
        <taxon>Embryophyta</taxon>
        <taxon>Tracheophyta</taxon>
        <taxon>Spermatophyta</taxon>
        <taxon>Magnoliopsida</taxon>
        <taxon>eudicotyledons</taxon>
        <taxon>Gunneridae</taxon>
        <taxon>Pentapetalae</taxon>
        <taxon>rosids</taxon>
        <taxon>malvids</taxon>
        <taxon>Brassicales</taxon>
        <taxon>Brassicaceae</taxon>
        <taxon>Camelineae</taxon>
        <taxon>Arabidopsis</taxon>
    </lineage>
</organism>
<feature type="initiator methionine" description="Removed" evidence="11">
    <location>
        <position position="1"/>
    </location>
</feature>
<feature type="chain" id="PRO_0000058800" description="Serine/threonine-protein phosphatase PP1 isozyme 4">
    <location>
        <begin position="2"/>
        <end position="321"/>
    </location>
</feature>
<feature type="active site" description="Proton donor" evidence="1">
    <location>
        <position position="135"/>
    </location>
</feature>
<feature type="binding site" evidence="1">
    <location>
        <position position="74"/>
    </location>
    <ligand>
        <name>Mn(2+)</name>
        <dbReference type="ChEBI" id="CHEBI:29035"/>
        <label>1</label>
    </ligand>
</feature>
<feature type="binding site" evidence="1">
    <location>
        <position position="76"/>
    </location>
    <ligand>
        <name>Mn(2+)</name>
        <dbReference type="ChEBI" id="CHEBI:29035"/>
        <label>1</label>
    </ligand>
</feature>
<feature type="binding site" evidence="1">
    <location>
        <position position="102"/>
    </location>
    <ligand>
        <name>Mn(2+)</name>
        <dbReference type="ChEBI" id="CHEBI:29035"/>
        <label>1</label>
    </ligand>
</feature>
<feature type="binding site" evidence="1">
    <location>
        <position position="102"/>
    </location>
    <ligand>
        <name>Mn(2+)</name>
        <dbReference type="ChEBI" id="CHEBI:29035"/>
        <label>2</label>
    </ligand>
</feature>
<feature type="binding site" evidence="1">
    <location>
        <position position="134"/>
    </location>
    <ligand>
        <name>Mn(2+)</name>
        <dbReference type="ChEBI" id="CHEBI:29035"/>
        <label>2</label>
    </ligand>
</feature>
<feature type="binding site" evidence="1">
    <location>
        <position position="183"/>
    </location>
    <ligand>
        <name>Mn(2+)</name>
        <dbReference type="ChEBI" id="CHEBI:29035"/>
        <label>2</label>
    </ligand>
</feature>
<feature type="binding site" evidence="1">
    <location>
        <position position="258"/>
    </location>
    <ligand>
        <name>Mn(2+)</name>
        <dbReference type="ChEBI" id="CHEBI:29035"/>
        <label>2</label>
    </ligand>
</feature>
<feature type="modified residue" description="N-acetylalanine" evidence="11">
    <location>
        <position position="2"/>
    </location>
</feature>
<sequence>MATTTTTQGQQTAIDSAVLDDIIRRLTEVRLARPGKQVQLSEAEIKQLCTTARDIFLQQPNLLELEAPIKICGDIHGQYSDLLRLFEYGGFPPSANYLFLGDYVDRGKQSLETICLLLAYKIKYPGNFFLLRGNHECASINRIYGFYDECKRRFNVRVWKVFTDCFNCLPVAALIDDKILCMHGGLSPDLDHLDEIRNLPRPTMIPDTGLLCDLLWSDPGKDVKGWGMNDRGVSYTFGPDKVSEFLTKHDLDLVCRAHQVVEDGYEFFADRQLVTVFSAPNYCGEFDNAGAMMSVDENLMCSFQILKPAEKKTKFMMSTKI</sequence>
<protein>
    <recommendedName>
        <fullName evidence="8">Serine/threonine-protein phosphatase PP1 isozyme 4</fullName>
        <ecNumber evidence="3">3.1.3.16</ecNumber>
    </recommendedName>
    <alternativeName>
        <fullName evidence="7">Type one protein phosphatase 4</fullName>
    </alternativeName>
</protein>
<accession>P48484</accession>
<accession>Q147H5</accession>
<comment type="function">
    <text evidence="3 4 5 6">Serine/threonine-protein phosphatase that possesses phosphatase activity toward para-nitrophenyl phosphate (pNPP) in vitro (PubMed:21222654). Acts as a positive regulator in the gibberellin (GA) signaling pathway to regulate plant growth and development. Promotes the GA-induced and proteasomal-dependent degradation of the DELLA proteins RGA and GAI by directly binding and dephosphorylating these proteins (PubMed:25010794). Involved in the regulation of phytochrome B (phyB) signaling pathway that controls photomorphogenesis. Promotes the proteasomal-dependent degradation of PIF5 factor by directly binding and dephosphorylating this protein (PubMed:26704640). Involved in the regulation of pavement cell (PC) interdigitation by modulating the auxin efflux carrier PIN1 polarity and endocytic trafficking. Regulates PIN1 polar targeting through direct binding and dephosphorylation. Acts antagonistically with PID in regulating PC development (PubMed:25560878).</text>
</comment>
<comment type="catalytic activity">
    <reaction evidence="3">
        <text>O-phospho-L-seryl-[protein] + H2O = L-seryl-[protein] + phosphate</text>
        <dbReference type="Rhea" id="RHEA:20629"/>
        <dbReference type="Rhea" id="RHEA-COMP:9863"/>
        <dbReference type="Rhea" id="RHEA-COMP:11604"/>
        <dbReference type="ChEBI" id="CHEBI:15377"/>
        <dbReference type="ChEBI" id="CHEBI:29999"/>
        <dbReference type="ChEBI" id="CHEBI:43474"/>
        <dbReference type="ChEBI" id="CHEBI:83421"/>
        <dbReference type="EC" id="3.1.3.16"/>
    </reaction>
</comment>
<comment type="catalytic activity">
    <reaction evidence="3">
        <text>O-phospho-L-threonyl-[protein] + H2O = L-threonyl-[protein] + phosphate</text>
        <dbReference type="Rhea" id="RHEA:47004"/>
        <dbReference type="Rhea" id="RHEA-COMP:11060"/>
        <dbReference type="Rhea" id="RHEA-COMP:11605"/>
        <dbReference type="ChEBI" id="CHEBI:15377"/>
        <dbReference type="ChEBI" id="CHEBI:30013"/>
        <dbReference type="ChEBI" id="CHEBI:43474"/>
        <dbReference type="ChEBI" id="CHEBI:61977"/>
        <dbReference type="EC" id="3.1.3.16"/>
    </reaction>
</comment>
<comment type="cofactor">
    <cofactor evidence="1">
        <name>Mn(2+)</name>
        <dbReference type="ChEBI" id="CHEBI:29035"/>
    </cofactor>
    <text evidence="1">Binds 2 manganese ions per subunit.</text>
</comment>
<comment type="activity regulation">
    <text evidence="3">Phosphatase activity is strongly reduced by the protein phosphatase inhibitor 2 (I-2).</text>
</comment>
<comment type="subunit">
    <text evidence="4 5 6">Interacts with the DELLA proteins RGA and GAI (PubMed:25010794). Interacts with PIF3 and PIF5 (PubMed:26704640). Interacts with the auxin efflux carrier PIN1 (PubMed:25560878).</text>
</comment>
<comment type="subcellular location">
    <subcellularLocation>
        <location evidence="2 4 5 6">Nucleus</location>
    </subcellularLocation>
    <subcellularLocation>
        <location evidence="2 5">Cytoplasm</location>
    </subcellularLocation>
    <text evidence="2 5">Localizes predominantly to the nucleus.</text>
</comment>
<comment type="tissue specificity">
    <text evidence="4">Expressed in the vasculature of roots and cotyledons, tips of leaves, guard cells, bases of trichomes, pistils and stamen filaments.</text>
</comment>
<comment type="disruption phenotype">
    <text evidence="4">Dwarf phenotype and decreased fertility.</text>
</comment>
<comment type="similarity">
    <text evidence="8">Belongs to the PPP phosphatase family. PP-1 subfamily.</text>
</comment>
<name>PP14_ARATH</name>
<reference key="1">
    <citation type="journal article" date="1993" name="Plant Mol. Biol.">
        <title>Expression of multiple type 1 phosphoprotein phosphatases in Arabidopsis thaliana.</title>
        <authorList>
            <person name="Smith R.D."/>
            <person name="Walker J.C."/>
        </authorList>
    </citation>
    <scope>NUCLEOTIDE SEQUENCE [MRNA]</scope>
</reference>
<reference key="2">
    <citation type="journal article" date="1999" name="Nature">
        <title>Sequence and analysis of chromosome 2 of the plant Arabidopsis thaliana.</title>
        <authorList>
            <person name="Lin X."/>
            <person name="Kaul S."/>
            <person name="Rounsley S.D."/>
            <person name="Shea T.P."/>
            <person name="Benito M.-I."/>
            <person name="Town C.D."/>
            <person name="Fujii C.Y."/>
            <person name="Mason T.M."/>
            <person name="Bowman C.L."/>
            <person name="Barnstead M.E."/>
            <person name="Feldblyum T.V."/>
            <person name="Buell C.R."/>
            <person name="Ketchum K.A."/>
            <person name="Lee J.J."/>
            <person name="Ronning C.M."/>
            <person name="Koo H.L."/>
            <person name="Moffat K.S."/>
            <person name="Cronin L.A."/>
            <person name="Shen M."/>
            <person name="Pai G."/>
            <person name="Van Aken S."/>
            <person name="Umayam L."/>
            <person name="Tallon L.J."/>
            <person name="Gill J.E."/>
            <person name="Adams M.D."/>
            <person name="Carrera A.J."/>
            <person name="Creasy T.H."/>
            <person name="Goodman H.M."/>
            <person name="Somerville C.R."/>
            <person name="Copenhaver G.P."/>
            <person name="Preuss D."/>
            <person name="Nierman W.C."/>
            <person name="White O."/>
            <person name="Eisen J.A."/>
            <person name="Salzberg S.L."/>
            <person name="Fraser C.M."/>
            <person name="Venter J.C."/>
        </authorList>
    </citation>
    <scope>NUCLEOTIDE SEQUENCE [LARGE SCALE GENOMIC DNA]</scope>
    <source>
        <strain>cv. Columbia</strain>
    </source>
</reference>
<reference key="3">
    <citation type="journal article" date="2017" name="Plant J.">
        <title>Araport11: a complete reannotation of the Arabidopsis thaliana reference genome.</title>
        <authorList>
            <person name="Cheng C.Y."/>
            <person name="Krishnakumar V."/>
            <person name="Chan A.P."/>
            <person name="Thibaud-Nissen F."/>
            <person name="Schobel S."/>
            <person name="Town C.D."/>
        </authorList>
    </citation>
    <scope>GENOME REANNOTATION</scope>
    <source>
        <strain>cv. Columbia</strain>
    </source>
</reference>
<reference key="4">
    <citation type="submission" date="2006-07" db="EMBL/GenBank/DDBJ databases">
        <title>Arabidopsis ORF clones.</title>
        <authorList>
            <person name="Kim C.J."/>
            <person name="Chen H."/>
            <person name="Quinitio C."/>
            <person name="Shinn P."/>
            <person name="Ecker J.R."/>
        </authorList>
    </citation>
    <scope>NUCLEOTIDE SEQUENCE [LARGE SCALE MRNA]</scope>
    <source>
        <strain>cv. Columbia</strain>
    </source>
</reference>
<reference key="5">
    <citation type="submission" date="2006-07" db="EMBL/GenBank/DDBJ databases">
        <title>Large-scale analysis of RIKEN Arabidopsis full-length (RAFL) cDNAs.</title>
        <authorList>
            <person name="Totoki Y."/>
            <person name="Seki M."/>
            <person name="Ishida J."/>
            <person name="Nakajima M."/>
            <person name="Enju A."/>
            <person name="Kamiya A."/>
            <person name="Narusaka M."/>
            <person name="Shin-i T."/>
            <person name="Nakagawa M."/>
            <person name="Sakamoto N."/>
            <person name="Oishi K."/>
            <person name="Kohara Y."/>
            <person name="Kobayashi M."/>
            <person name="Toyoda A."/>
            <person name="Sakaki Y."/>
            <person name="Sakurai T."/>
            <person name="Iida K."/>
            <person name="Akiyama K."/>
            <person name="Satou M."/>
            <person name="Toyoda T."/>
            <person name="Konagaya A."/>
            <person name="Carninci P."/>
            <person name="Kawai J."/>
            <person name="Hayashizaki Y."/>
            <person name="Shinozaki K."/>
        </authorList>
    </citation>
    <scope>NUCLEOTIDE SEQUENCE [LARGE SCALE MRNA]</scope>
    <source>
        <strain>cv. Columbia</strain>
    </source>
</reference>
<reference key="6">
    <citation type="journal article" date="2007" name="Trends Plant Sci.">
        <title>Arabidopsis PPP family of serine/threonine phosphatases.</title>
        <authorList>
            <person name="Farkas I."/>
            <person name="Dombradi V."/>
            <person name="Miskei M."/>
            <person name="Szabados L."/>
            <person name="Koncz C."/>
        </authorList>
    </citation>
    <scope>GENE FAMILY</scope>
    <scope>NOMENCLATURE</scope>
</reference>
<reference key="7">
    <citation type="journal article" date="2009" name="Plant Physiol.">
        <title>Identification and functional characterization of inhibitor-3, a regulatory subunit of protein phosphatase 1 in plants.</title>
        <authorList>
            <person name="Takemiya A."/>
            <person name="Ariyoshi C."/>
            <person name="Shimazaki K."/>
        </authorList>
    </citation>
    <scope>SUBCELLULAR LOCATION</scope>
</reference>
<reference key="8">
    <citation type="journal article" date="2011" name="Biochem. J.">
        <title>Identification and characterization of AtI-2, an Arabidopsis homologue of an ancient protein phosphatase 1 (PP1) regulatory subunit.</title>
        <authorList>
            <person name="Templeton G.W."/>
            <person name="Nimick M."/>
            <person name="Morrice N."/>
            <person name="Campbell D."/>
            <person name="Goudreault M."/>
            <person name="Gingras A.C."/>
            <person name="Takemiya A."/>
            <person name="Shimazaki K."/>
            <person name="Moorhead G.B."/>
        </authorList>
    </citation>
    <scope>IDENTIFICATION BY MASS SPECTROMETRY</scope>
    <scope>FUNCTION</scope>
    <scope>CATALYTIC ACTIVITY</scope>
    <scope>ACTIVITY REGULATION</scope>
</reference>
<reference key="9">
    <citation type="journal article" date="2012" name="Mol. Cell. Proteomics">
        <title>Comparative large-scale characterisation of plant vs. mammal proteins reveals similar and idiosyncratic N-alpha acetylation features.</title>
        <authorList>
            <person name="Bienvenut W.V."/>
            <person name="Sumpton D."/>
            <person name="Martinez A."/>
            <person name="Lilla S."/>
            <person name="Espagne C."/>
            <person name="Meinnel T."/>
            <person name="Giglione C."/>
        </authorList>
    </citation>
    <scope>ACETYLATION [LARGE SCALE ANALYSIS] AT ALA-2</scope>
    <scope>CLEAVAGE OF INITIATOR METHIONINE [LARGE SCALE ANALYSIS]</scope>
    <scope>IDENTIFICATION BY MASS SPECTROMETRY [LARGE SCALE ANALYSIS]</scope>
</reference>
<reference key="10">
    <citation type="journal article" date="2014" name="PLoS Genet.">
        <title>Arabidopsis DELLA protein degradation is controlled by a type-one protein phosphatase, TOPP4.</title>
        <authorList>
            <person name="Qin Q."/>
            <person name="Wang W."/>
            <person name="Guo X."/>
            <person name="Yue J."/>
            <person name="Huang Y."/>
            <person name="Xu X."/>
            <person name="Li J."/>
            <person name="Hou S."/>
        </authorList>
    </citation>
    <scope>FUNCTION</scope>
    <scope>INTERACTION WITH RGA AND GAI</scope>
    <scope>TISSUE SPECIFICITY</scope>
    <scope>DISRUPTION PHENOTYPE</scope>
</reference>
<reference key="11">
    <citation type="journal article" date="2015" name="Plant Physiol.">
        <title>TYPE-ONE PROTEIN PHOSPHATASE4 regulates pavement cell interdigitation by modulating PIN-FORMED1 polarity and trafficking in Arabidopsis.</title>
        <authorList>
            <person name="Guo X."/>
            <person name="Qin Q."/>
            <person name="Yan J."/>
            <person name="Niu Y."/>
            <person name="Huang B."/>
            <person name="Guan L."/>
            <person name="Li Y."/>
            <person name="Ren D."/>
            <person name="Li J."/>
            <person name="Hou S."/>
        </authorList>
    </citation>
    <scope>FUNCTION</scope>
    <scope>INTERACTION WITH THE AUXIN EFFLUX CARRIER PIN1</scope>
    <scope>SUBCELLULAR LOCATION</scope>
</reference>
<reference key="12">
    <citation type="journal article" date="2016" name="Plant Physiol.">
        <title>TOPP4 regulates the stability of PHYTOCHROME INTERACTING FACTOR5 during photomorphogenesis in Arabidopsis.</title>
        <authorList>
            <person name="Yue J."/>
            <person name="Qin Q."/>
            <person name="Meng S."/>
            <person name="Jing H."/>
            <person name="Gou X."/>
            <person name="Li J."/>
            <person name="Hou S."/>
        </authorList>
    </citation>
    <scope>FUNCTION</scope>
    <scope>INTERACTION WITH PIF3 AND PIF5</scope>
    <scope>SUBCELLULAR LOCATION</scope>
</reference>
<gene>
    <name evidence="7" type="primary">TOPP4</name>
    <name evidence="9" type="ordered locus">At2g39840</name>
    <name evidence="10" type="ORF">T5I7.14</name>
</gene>
<dbReference type="EC" id="3.1.3.16" evidence="3"/>
<dbReference type="EMBL" id="M93411">
    <property type="protein sequence ID" value="AAA32839.1"/>
    <property type="molecule type" value="mRNA"/>
</dbReference>
<dbReference type="EMBL" id="AC003000">
    <property type="protein sequence ID" value="AAB87136.1"/>
    <property type="molecule type" value="Genomic_DNA"/>
</dbReference>
<dbReference type="EMBL" id="CP002685">
    <property type="protein sequence ID" value="AEC09737.1"/>
    <property type="molecule type" value="Genomic_DNA"/>
</dbReference>
<dbReference type="EMBL" id="BT026118">
    <property type="protein sequence ID" value="ABG48474.1"/>
    <property type="molecule type" value="mRNA"/>
</dbReference>
<dbReference type="EMBL" id="AK229028">
    <property type="protein sequence ID" value="BAF00914.1"/>
    <property type="molecule type" value="mRNA"/>
</dbReference>
<dbReference type="PIR" id="S31088">
    <property type="entry name" value="S31088"/>
</dbReference>
<dbReference type="RefSeq" id="NP_181514.1">
    <property type="nucleotide sequence ID" value="NM_129543.3"/>
</dbReference>
<dbReference type="SMR" id="P48484"/>
<dbReference type="BioGRID" id="3909">
    <property type="interactions" value="7"/>
</dbReference>
<dbReference type="FunCoup" id="P48484">
    <property type="interactions" value="3853"/>
</dbReference>
<dbReference type="STRING" id="3702.P48484"/>
<dbReference type="iPTMnet" id="P48484"/>
<dbReference type="PaxDb" id="3702-AT2G39840.1"/>
<dbReference type="ProteomicsDB" id="249134"/>
<dbReference type="EnsemblPlants" id="AT2G39840.1">
    <property type="protein sequence ID" value="AT2G39840.1"/>
    <property type="gene ID" value="AT2G39840"/>
</dbReference>
<dbReference type="GeneID" id="818571"/>
<dbReference type="Gramene" id="AT2G39840.1">
    <property type="protein sequence ID" value="AT2G39840.1"/>
    <property type="gene ID" value="AT2G39840"/>
</dbReference>
<dbReference type="KEGG" id="ath:AT2G39840"/>
<dbReference type="Araport" id="AT2G39840"/>
<dbReference type="TAIR" id="AT2G39840">
    <property type="gene designation" value="TOPP4"/>
</dbReference>
<dbReference type="eggNOG" id="KOG0374">
    <property type="taxonomic scope" value="Eukaryota"/>
</dbReference>
<dbReference type="HOGENOM" id="CLU_004962_0_0_1"/>
<dbReference type="InParanoid" id="P48484"/>
<dbReference type="OMA" id="SIFICRG"/>
<dbReference type="OrthoDB" id="1930084at2759"/>
<dbReference type="PhylomeDB" id="P48484"/>
<dbReference type="PRO" id="PR:P48484"/>
<dbReference type="Proteomes" id="UP000006548">
    <property type="component" value="Chromosome 2"/>
</dbReference>
<dbReference type="ExpressionAtlas" id="P48484">
    <property type="expression patterns" value="baseline and differential"/>
</dbReference>
<dbReference type="GO" id="GO:0005634">
    <property type="term" value="C:nucleus"/>
    <property type="evidence" value="ECO:0000314"/>
    <property type="project" value="TAIR"/>
</dbReference>
<dbReference type="GO" id="GO:0000164">
    <property type="term" value="C:protein phosphatase type 1 complex"/>
    <property type="evidence" value="ECO:0000250"/>
    <property type="project" value="TAIR"/>
</dbReference>
<dbReference type="GO" id="GO:0046872">
    <property type="term" value="F:metal ion binding"/>
    <property type="evidence" value="ECO:0007669"/>
    <property type="project" value="UniProtKB-KW"/>
</dbReference>
<dbReference type="GO" id="GO:0004722">
    <property type="term" value="F:protein serine/threonine phosphatase activity"/>
    <property type="evidence" value="ECO:0000314"/>
    <property type="project" value="TAIR"/>
</dbReference>
<dbReference type="GO" id="GO:0016311">
    <property type="term" value="P:dephosphorylation"/>
    <property type="evidence" value="ECO:0000314"/>
    <property type="project" value="TAIR"/>
</dbReference>
<dbReference type="GO" id="GO:0009740">
    <property type="term" value="P:gibberellic acid mediated signaling pathway"/>
    <property type="evidence" value="ECO:0000316"/>
    <property type="project" value="TAIR"/>
</dbReference>
<dbReference type="GO" id="GO:0006470">
    <property type="term" value="P:protein dephosphorylation"/>
    <property type="evidence" value="ECO:0000304"/>
    <property type="project" value="TAIR"/>
</dbReference>
<dbReference type="GO" id="GO:0006468">
    <property type="term" value="P:protein phosphorylation"/>
    <property type="evidence" value="ECO:0000353"/>
    <property type="project" value="TAIR"/>
</dbReference>
<dbReference type="GO" id="GO:0010161">
    <property type="term" value="P:red light signaling pathway"/>
    <property type="evidence" value="ECO:0000315"/>
    <property type="project" value="TAIR"/>
</dbReference>
<dbReference type="CDD" id="cd07414">
    <property type="entry name" value="MPP_PP1_PPKL"/>
    <property type="match status" value="1"/>
</dbReference>
<dbReference type="FunFam" id="3.60.21.10:FF:000212">
    <property type="entry name" value="Serine/threonine-protein phosphatase"/>
    <property type="match status" value="1"/>
</dbReference>
<dbReference type="Gene3D" id="3.60.21.10">
    <property type="match status" value="1"/>
</dbReference>
<dbReference type="InterPro" id="IPR004843">
    <property type="entry name" value="Calcineurin-like_PHP_ApaH"/>
</dbReference>
<dbReference type="InterPro" id="IPR029052">
    <property type="entry name" value="Metallo-depent_PP-like"/>
</dbReference>
<dbReference type="InterPro" id="IPR050341">
    <property type="entry name" value="PP1_catalytic_subunit"/>
</dbReference>
<dbReference type="InterPro" id="IPR006186">
    <property type="entry name" value="Ser/Thr-sp_prot-phosphatase"/>
</dbReference>
<dbReference type="InterPro" id="IPR031675">
    <property type="entry name" value="STPPase_N"/>
</dbReference>
<dbReference type="PANTHER" id="PTHR11668">
    <property type="entry name" value="SERINE/THREONINE PROTEIN PHOSPHATASE"/>
    <property type="match status" value="1"/>
</dbReference>
<dbReference type="PANTHER" id="PTHR11668:SF490">
    <property type="entry name" value="SERINE_THREONINE-PROTEIN PHOSPHATASE PP1 ISOZYME 4"/>
    <property type="match status" value="1"/>
</dbReference>
<dbReference type="Pfam" id="PF00149">
    <property type="entry name" value="Metallophos"/>
    <property type="match status" value="1"/>
</dbReference>
<dbReference type="Pfam" id="PF16891">
    <property type="entry name" value="STPPase_N"/>
    <property type="match status" value="1"/>
</dbReference>
<dbReference type="PRINTS" id="PR00114">
    <property type="entry name" value="STPHPHTASE"/>
</dbReference>
<dbReference type="SMART" id="SM00156">
    <property type="entry name" value="PP2Ac"/>
    <property type="match status" value="1"/>
</dbReference>
<dbReference type="SUPFAM" id="SSF56300">
    <property type="entry name" value="Metallo-dependent phosphatases"/>
    <property type="match status" value="1"/>
</dbReference>
<dbReference type="PROSITE" id="PS00125">
    <property type="entry name" value="SER_THR_PHOSPHATASE"/>
    <property type="match status" value="1"/>
</dbReference>